<protein>
    <recommendedName>
        <fullName evidence="1">ATP synthase subunit a</fullName>
    </recommendedName>
    <alternativeName>
        <fullName evidence="1">ATP synthase F0 sector subunit a</fullName>
    </alternativeName>
    <alternativeName>
        <fullName evidence="1">F-ATPase subunit 6</fullName>
    </alternativeName>
</protein>
<name>ATP6_RUBXD</name>
<organism>
    <name type="scientific">Rubrobacter xylanophilus (strain DSM 9941 / JCM 11954 / NBRC 16129 / PRD-1)</name>
    <dbReference type="NCBI Taxonomy" id="266117"/>
    <lineage>
        <taxon>Bacteria</taxon>
        <taxon>Bacillati</taxon>
        <taxon>Actinomycetota</taxon>
        <taxon>Rubrobacteria</taxon>
        <taxon>Rubrobacterales</taxon>
        <taxon>Rubrobacteraceae</taxon>
        <taxon>Rubrobacter</taxon>
    </lineage>
</organism>
<accession>Q1AVH3</accession>
<evidence type="ECO:0000255" key="1">
    <source>
        <dbReference type="HAMAP-Rule" id="MF_01393"/>
    </source>
</evidence>
<comment type="function">
    <text evidence="1">Key component of the proton channel; it plays a direct role in the translocation of protons across the membrane.</text>
</comment>
<comment type="subunit">
    <text evidence="1">F-type ATPases have 2 components, CF(1) - the catalytic core - and CF(0) - the membrane proton channel. CF(1) has five subunits: alpha(3), beta(3), gamma(1), delta(1), epsilon(1). CF(0) has three main subunits: a(1), b(2) and c(9-12). The alpha and beta chains form an alternating ring which encloses part of the gamma chain. CF(1) is attached to CF(0) by a central stalk formed by the gamma and epsilon chains, while a peripheral stalk is formed by the delta and b chains.</text>
</comment>
<comment type="subcellular location">
    <subcellularLocation>
        <location evidence="1">Cell membrane</location>
        <topology evidence="1">Multi-pass membrane protein</topology>
    </subcellularLocation>
</comment>
<comment type="similarity">
    <text evidence="1">Belongs to the ATPase A chain family.</text>
</comment>
<sequence length="258" mass="29735">MEVTQEELRHEILHTWEAAREAWVIHLEIAGINLSINKPVWFLWLGAAITFLFMYVGARTLRDRPGAYQVLVEELFRFGRDMFGGQINEEGRKWFPYSLTLFIFLLVLNIIGLFPNSYPVTSNISFTATLALFTFVLTQYEGVRRNGLVTYLKSWAPADLPAKPLMYPIMWFLHLIQEFTKPLTLALRLYANILAGHLIIFVFLSLILYFGLPTAFVSVPFAVVFYAFEIFVAVIQAYIFAILTQVYIELAMFAEEAH</sequence>
<dbReference type="EMBL" id="CP000386">
    <property type="protein sequence ID" value="ABG04605.1"/>
    <property type="molecule type" value="Genomic_DNA"/>
</dbReference>
<dbReference type="SMR" id="Q1AVH3"/>
<dbReference type="STRING" id="266117.Rxyl_1644"/>
<dbReference type="KEGG" id="rxy:Rxyl_1644"/>
<dbReference type="eggNOG" id="COG0356">
    <property type="taxonomic scope" value="Bacteria"/>
</dbReference>
<dbReference type="HOGENOM" id="CLU_041018_0_1_11"/>
<dbReference type="PhylomeDB" id="Q1AVH3"/>
<dbReference type="Proteomes" id="UP000006637">
    <property type="component" value="Chromosome"/>
</dbReference>
<dbReference type="GO" id="GO:0005886">
    <property type="term" value="C:plasma membrane"/>
    <property type="evidence" value="ECO:0007669"/>
    <property type="project" value="UniProtKB-SubCell"/>
</dbReference>
<dbReference type="GO" id="GO:0045259">
    <property type="term" value="C:proton-transporting ATP synthase complex"/>
    <property type="evidence" value="ECO:0007669"/>
    <property type="project" value="UniProtKB-KW"/>
</dbReference>
<dbReference type="GO" id="GO:0046933">
    <property type="term" value="F:proton-transporting ATP synthase activity, rotational mechanism"/>
    <property type="evidence" value="ECO:0007669"/>
    <property type="project" value="UniProtKB-UniRule"/>
</dbReference>
<dbReference type="GO" id="GO:0042777">
    <property type="term" value="P:proton motive force-driven plasma membrane ATP synthesis"/>
    <property type="evidence" value="ECO:0007669"/>
    <property type="project" value="TreeGrafter"/>
</dbReference>
<dbReference type="CDD" id="cd00310">
    <property type="entry name" value="ATP-synt_Fo_a_6"/>
    <property type="match status" value="1"/>
</dbReference>
<dbReference type="Gene3D" id="1.20.120.220">
    <property type="entry name" value="ATP synthase, F0 complex, subunit A"/>
    <property type="match status" value="1"/>
</dbReference>
<dbReference type="HAMAP" id="MF_01393">
    <property type="entry name" value="ATP_synth_a_bact"/>
    <property type="match status" value="1"/>
</dbReference>
<dbReference type="InterPro" id="IPR045082">
    <property type="entry name" value="ATP_syn_F0_a_bact/chloroplast"/>
</dbReference>
<dbReference type="InterPro" id="IPR000568">
    <property type="entry name" value="ATP_synth_F0_asu"/>
</dbReference>
<dbReference type="InterPro" id="IPR023011">
    <property type="entry name" value="ATP_synth_F0_asu_AS"/>
</dbReference>
<dbReference type="InterPro" id="IPR035908">
    <property type="entry name" value="F0_ATP_A_sf"/>
</dbReference>
<dbReference type="NCBIfam" id="TIGR01131">
    <property type="entry name" value="ATP_synt_6_or_A"/>
    <property type="match status" value="1"/>
</dbReference>
<dbReference type="PANTHER" id="PTHR42823">
    <property type="entry name" value="ATP SYNTHASE SUBUNIT A, CHLOROPLASTIC"/>
    <property type="match status" value="1"/>
</dbReference>
<dbReference type="PANTHER" id="PTHR42823:SF3">
    <property type="entry name" value="ATP SYNTHASE SUBUNIT A, CHLOROPLASTIC"/>
    <property type="match status" value="1"/>
</dbReference>
<dbReference type="Pfam" id="PF00119">
    <property type="entry name" value="ATP-synt_A"/>
    <property type="match status" value="1"/>
</dbReference>
<dbReference type="PRINTS" id="PR00123">
    <property type="entry name" value="ATPASEA"/>
</dbReference>
<dbReference type="SUPFAM" id="SSF81336">
    <property type="entry name" value="F1F0 ATP synthase subunit A"/>
    <property type="match status" value="1"/>
</dbReference>
<dbReference type="PROSITE" id="PS00449">
    <property type="entry name" value="ATPASE_A"/>
    <property type="match status" value="1"/>
</dbReference>
<reference key="1">
    <citation type="submission" date="2006-06" db="EMBL/GenBank/DDBJ databases">
        <title>Complete sequence of Rubrobacter xylanophilus DSM 9941.</title>
        <authorList>
            <consortium name="US DOE Joint Genome Institute"/>
            <person name="Copeland A."/>
            <person name="Lucas S."/>
            <person name="Lapidus A."/>
            <person name="Barry K."/>
            <person name="Detter J.C."/>
            <person name="Glavina del Rio T."/>
            <person name="Hammon N."/>
            <person name="Israni S."/>
            <person name="Dalin E."/>
            <person name="Tice H."/>
            <person name="Pitluck S."/>
            <person name="Munk A.C."/>
            <person name="Brettin T."/>
            <person name="Bruce D."/>
            <person name="Han C."/>
            <person name="Tapia R."/>
            <person name="Gilna P."/>
            <person name="Schmutz J."/>
            <person name="Larimer F."/>
            <person name="Land M."/>
            <person name="Hauser L."/>
            <person name="Kyrpides N."/>
            <person name="Lykidis A."/>
            <person name="da Costa M.S."/>
            <person name="Rainey F.A."/>
            <person name="Empadinhas N."/>
            <person name="Jolivet E."/>
            <person name="Battista J.R."/>
            <person name="Richardson P."/>
        </authorList>
    </citation>
    <scope>NUCLEOTIDE SEQUENCE [LARGE SCALE GENOMIC DNA]</scope>
    <source>
        <strain>DSM 9941 / JCM 11954 / NBRC 16129 / PRD-1</strain>
    </source>
</reference>
<proteinExistence type="inferred from homology"/>
<feature type="chain" id="PRO_0000362430" description="ATP synthase subunit a">
    <location>
        <begin position="1"/>
        <end position="258"/>
    </location>
</feature>
<feature type="transmembrane region" description="Helical" evidence="1">
    <location>
        <begin position="38"/>
        <end position="58"/>
    </location>
</feature>
<feature type="transmembrane region" description="Helical" evidence="1">
    <location>
        <begin position="94"/>
        <end position="114"/>
    </location>
</feature>
<feature type="transmembrane region" description="Helical" evidence="1">
    <location>
        <begin position="118"/>
        <end position="138"/>
    </location>
</feature>
<feature type="transmembrane region" description="Helical" evidence="1">
    <location>
        <begin position="193"/>
        <end position="213"/>
    </location>
</feature>
<feature type="transmembrane region" description="Helical" evidence="1">
    <location>
        <begin position="215"/>
        <end position="235"/>
    </location>
</feature>
<gene>
    <name evidence="1" type="primary">atpB</name>
    <name type="ordered locus">Rxyl_1644</name>
</gene>
<keyword id="KW-0066">ATP synthesis</keyword>
<keyword id="KW-1003">Cell membrane</keyword>
<keyword id="KW-0138">CF(0)</keyword>
<keyword id="KW-0375">Hydrogen ion transport</keyword>
<keyword id="KW-0406">Ion transport</keyword>
<keyword id="KW-0472">Membrane</keyword>
<keyword id="KW-1185">Reference proteome</keyword>
<keyword id="KW-0812">Transmembrane</keyword>
<keyword id="KW-1133">Transmembrane helix</keyword>
<keyword id="KW-0813">Transport</keyword>